<evidence type="ECO:0000269" key="1">
    <source>
    </source>
</evidence>
<evidence type="ECO:0000305" key="2"/>
<evidence type="ECO:0007744" key="3">
    <source>
    </source>
</evidence>
<evidence type="ECO:0007744" key="4">
    <source>
    </source>
</evidence>
<accession>P46679</accession>
<accession>D6VZM8</accession>
<proteinExistence type="evidence at protein level"/>
<reference key="1">
    <citation type="journal article" date="1997" name="Mol. Gen. Genet.">
        <title>Identification of the Saccharomyces cerevisiae genes STB1-STB5 encoding Sin3p binding proteins.</title>
        <authorList>
            <person name="Kasten M.M."/>
            <person name="Stillman D.J."/>
        </authorList>
    </citation>
    <scope>NUCLEOTIDE SEQUENCE [GENOMIC DNA]</scope>
    <scope>INTERACTION WITH SIN3</scope>
</reference>
<reference key="2">
    <citation type="journal article" date="1997" name="Nature">
        <title>The nucleotide sequence of Saccharomyces cerevisiae chromosome XIII.</title>
        <authorList>
            <person name="Bowman S."/>
            <person name="Churcher C.M."/>
            <person name="Badcock K."/>
            <person name="Brown D."/>
            <person name="Chillingworth T."/>
            <person name="Connor R."/>
            <person name="Dedman K."/>
            <person name="Devlin K."/>
            <person name="Gentles S."/>
            <person name="Hamlin N."/>
            <person name="Hunt S."/>
            <person name="Jagels K."/>
            <person name="Lye G."/>
            <person name="Moule S."/>
            <person name="Odell C."/>
            <person name="Pearson D."/>
            <person name="Rajandream M.A."/>
            <person name="Rice P."/>
            <person name="Skelton J."/>
            <person name="Walsh S.V."/>
            <person name="Whitehead S."/>
            <person name="Barrell B.G."/>
        </authorList>
    </citation>
    <scope>NUCLEOTIDE SEQUENCE [LARGE SCALE GENOMIC DNA]</scope>
    <source>
        <strain>ATCC 204508 / S288c</strain>
    </source>
</reference>
<reference key="3">
    <citation type="journal article" date="2014" name="G3 (Bethesda)">
        <title>The reference genome sequence of Saccharomyces cerevisiae: Then and now.</title>
        <authorList>
            <person name="Engel S.R."/>
            <person name="Dietrich F.S."/>
            <person name="Fisk D.G."/>
            <person name="Binkley G."/>
            <person name="Balakrishnan R."/>
            <person name="Costanzo M.C."/>
            <person name="Dwight S.S."/>
            <person name="Hitz B.C."/>
            <person name="Karra K."/>
            <person name="Nash R.S."/>
            <person name="Weng S."/>
            <person name="Wong E.D."/>
            <person name="Lloyd P."/>
            <person name="Skrzypek M.S."/>
            <person name="Miyasato S.R."/>
            <person name="Simison M."/>
            <person name="Cherry J.M."/>
        </authorList>
    </citation>
    <scope>GENOME REANNOTATION</scope>
    <source>
        <strain>ATCC 204508 / S288c</strain>
    </source>
</reference>
<reference key="4">
    <citation type="journal article" date="1995" name="Yeast">
        <title>Localization of the FAR3 gene: genetic mapping and molecular cloning using a chromosome walk-'n'-roll strategy.</title>
        <authorList>
            <person name="Horecka J."/>
        </authorList>
    </citation>
    <scope>NUCLEOTIDE SEQUENCE [GENOMIC DNA] OF 609-850</scope>
    <source>
        <strain>SC252</strain>
    </source>
</reference>
<reference key="5">
    <citation type="journal article" date="2008" name="Mol. Cell. Proteomics">
        <title>A multidimensional chromatography technology for in-depth phosphoproteome analysis.</title>
        <authorList>
            <person name="Albuquerque C.P."/>
            <person name="Smolka M.B."/>
            <person name="Payne S.H."/>
            <person name="Bafna V."/>
            <person name="Eng J."/>
            <person name="Zhou H."/>
        </authorList>
    </citation>
    <scope>PHOSPHORYLATION [LARGE SCALE ANALYSIS] AT SER-594</scope>
    <scope>IDENTIFICATION BY MASS SPECTROMETRY [LARGE SCALE ANALYSIS]</scope>
</reference>
<reference key="6">
    <citation type="journal article" date="2009" name="Science">
        <title>Global analysis of Cdk1 substrate phosphorylation sites provides insights into evolution.</title>
        <authorList>
            <person name="Holt L.J."/>
            <person name="Tuch B.B."/>
            <person name="Villen J."/>
            <person name="Johnson A.D."/>
            <person name="Gygi S.P."/>
            <person name="Morgan D.O."/>
        </authorList>
    </citation>
    <scope>PHOSPHORYLATION [LARGE SCALE ANALYSIS] AT SER-625</scope>
    <scope>IDENTIFICATION BY MASS SPECTROMETRY [LARGE SCALE ANALYSIS]</scope>
</reference>
<organism>
    <name type="scientific">Saccharomyces cerevisiae (strain ATCC 204508 / S288c)</name>
    <name type="common">Baker's yeast</name>
    <dbReference type="NCBI Taxonomy" id="559292"/>
    <lineage>
        <taxon>Eukaryota</taxon>
        <taxon>Fungi</taxon>
        <taxon>Dikarya</taxon>
        <taxon>Ascomycota</taxon>
        <taxon>Saccharomycotina</taxon>
        <taxon>Saccharomycetes</taxon>
        <taxon>Saccharomycetales</taxon>
        <taxon>Saccharomycetaceae</taxon>
        <taxon>Saccharomyces</taxon>
    </lineage>
</organism>
<name>STB2_YEAST</name>
<keyword id="KW-0597">Phosphoprotein</keyword>
<keyword id="KW-1185">Reference proteome</keyword>
<protein>
    <recommendedName>
        <fullName>Protein STB2</fullName>
    </recommendedName>
</protein>
<feature type="chain" id="PRO_0000072252" description="Protein STB2">
    <location>
        <begin position="1"/>
        <end position="850"/>
    </location>
</feature>
<feature type="modified residue" description="Phosphoserine" evidence="3">
    <location>
        <position position="594"/>
    </location>
</feature>
<feature type="modified residue" description="Phosphoserine" evidence="4">
    <location>
        <position position="625"/>
    </location>
</feature>
<gene>
    <name type="primary">STB2</name>
    <name type="ordered locus">YMR053C</name>
    <name type="ORF">YM9796.06C</name>
</gene>
<comment type="subunit">
    <text evidence="1">Interacts with SIN3.</text>
</comment>
<comment type="similarity">
    <text evidence="2">To yeast STB6.</text>
</comment>
<dbReference type="EMBL" id="U33438">
    <property type="protein sequence ID" value="AAA75481.1"/>
    <property type="molecule type" value="Genomic_DNA"/>
</dbReference>
<dbReference type="EMBL" id="Z49703">
    <property type="protein sequence ID" value="CAA89763.1"/>
    <property type="molecule type" value="Genomic_DNA"/>
</dbReference>
<dbReference type="EMBL" id="U35609">
    <property type="protein sequence ID" value="AAB39036.1"/>
    <property type="molecule type" value="Genomic_DNA"/>
</dbReference>
<dbReference type="EMBL" id="BK006946">
    <property type="protein sequence ID" value="DAA09952.1"/>
    <property type="molecule type" value="Genomic_DNA"/>
</dbReference>
<dbReference type="PIR" id="S54553">
    <property type="entry name" value="S54553"/>
</dbReference>
<dbReference type="RefSeq" id="NP_013769.1">
    <property type="nucleotide sequence ID" value="NM_001182551.1"/>
</dbReference>
<dbReference type="SMR" id="P46679"/>
<dbReference type="BioGRID" id="35229">
    <property type="interactions" value="118"/>
</dbReference>
<dbReference type="DIP" id="DIP-1725N"/>
<dbReference type="FunCoup" id="P46679">
    <property type="interactions" value="83"/>
</dbReference>
<dbReference type="IntAct" id="P46679">
    <property type="interactions" value="4"/>
</dbReference>
<dbReference type="MINT" id="P46679"/>
<dbReference type="STRING" id="4932.YMR053C"/>
<dbReference type="iPTMnet" id="P46679"/>
<dbReference type="PaxDb" id="4932-YMR053C"/>
<dbReference type="PeptideAtlas" id="P46679"/>
<dbReference type="EnsemblFungi" id="YMR053C_mRNA">
    <property type="protein sequence ID" value="YMR053C"/>
    <property type="gene ID" value="YMR053C"/>
</dbReference>
<dbReference type="GeneID" id="855075"/>
<dbReference type="KEGG" id="sce:YMR053C"/>
<dbReference type="AGR" id="SGD:S000004657"/>
<dbReference type="SGD" id="S000004657">
    <property type="gene designation" value="STB2"/>
</dbReference>
<dbReference type="VEuPathDB" id="FungiDB:YMR053C"/>
<dbReference type="eggNOG" id="ENOG502QT8Q">
    <property type="taxonomic scope" value="Eukaryota"/>
</dbReference>
<dbReference type="GeneTree" id="ENSGT00940000176579"/>
<dbReference type="HOGENOM" id="CLU_010065_0_0_1"/>
<dbReference type="InParanoid" id="P46679"/>
<dbReference type="OMA" id="VHGFEIY"/>
<dbReference type="OrthoDB" id="19806at2759"/>
<dbReference type="BioCyc" id="YEAST:G3O-32758-MONOMER"/>
<dbReference type="BioGRID-ORCS" id="855075">
    <property type="hits" value="0 hits in 10 CRISPR screens"/>
</dbReference>
<dbReference type="PRO" id="PR:P46679"/>
<dbReference type="Proteomes" id="UP000002311">
    <property type="component" value="Chromosome XIII"/>
</dbReference>
<dbReference type="RNAct" id="P46679">
    <property type="molecule type" value="protein"/>
</dbReference>
<dbReference type="GO" id="GO:0070822">
    <property type="term" value="C:Sin3-type complex"/>
    <property type="evidence" value="ECO:0000314"/>
    <property type="project" value="SGD"/>
</dbReference>
<dbReference type="InterPro" id="IPR038919">
    <property type="entry name" value="Stb2/Stb6"/>
</dbReference>
<dbReference type="PANTHER" id="PTHR31011">
    <property type="entry name" value="PROTEIN STB2-RELATED"/>
    <property type="match status" value="1"/>
</dbReference>
<dbReference type="PANTHER" id="PTHR31011:SF2">
    <property type="entry name" value="PROTEIN STB2-RELATED"/>
    <property type="match status" value="1"/>
</dbReference>
<sequence length="850" mass="97828">MVMADTIATGDKTSQFDGKHMQDLERIYSTRDTLDDNFFGERGQKDANGDYYDELNNEETNYSGSSYYGHSDDSEVVGLIKNDTVSQLPPLDSFIFPDSRALFLLDLGNYADLTYEEIIVHGFEIYIVEQWVACRNLSTLITSYTGNSQDTISGVRVVLPKDTSMWPGRFRLYFEELMEFARPKFTPKGTLFITNLSGVSFGLNLLHVECGDLRTIWKDFEVNFDLKNLHCGGRSANLLCPPTMASLDKFSQLFKIPTNGFIAQYPQMIQQQQPRLPEEEYKTVGNSKCRNTDSKSPVVEMVTLIQISLSYFNLLSKNYQTDGLLCEDTKRAIDEWWETYGKLYLGTEKPRNECTLGPTTVAGLISLILCCYFKLMIENCISSKDPFDEAGFFQGIYNFQKKHGLNKRKSRVYLDPRTLEKLFEVTAKVSSKDIFKLKKMVTSTVQDIIGKGNPINLSHKILTTDLDTLIHNIHGGSVGLLWKGKGHPRKCCTDISNEEFLKFNYQRGDPDGQIREREMLLEKFRLERIAYAQKHASKKVSSSSLDTSEDIGRTNAMPSSATVSSMFPNYDNTKYAYNFGINKLYQGEYYRRNSFPYCKDRTHDNIYEDLSELKEKSSRLYRCNSSSAVQNIVEKWDLPFDPSVVRIARDLLRMKYDIQAQQHIQEMDEHYMGKLNKEGTVGQYSKFNERYKRLQELYKKYSDGAKVFEGRFEDIDNKQQLLLHEMQELNSLSSRLKYDMRILEVRVRDIESSVAQFDSKLIGLKSSLQGQGKTGICSAIDPKSDKDEYDRCVNDLMTTNNPTYEALCLKMLSRRYFKDLKNDTVGWFRWLFGNNSLHNNASEDDRGIRV</sequence>